<name>CAF17_CANAL</name>
<protein>
    <recommendedName>
        <fullName>Iron-sulfur cluster assembly factor IBA57 homolog, mitochondrial</fullName>
    </recommendedName>
</protein>
<keyword id="KW-0496">Mitochondrion</keyword>
<keyword id="KW-1185">Reference proteome</keyword>
<keyword id="KW-0809">Transit peptide</keyword>
<gene>
    <name type="primary">CAF17</name>
    <name type="ordered locus">CAALFM_C303190CA</name>
    <name type="ORF">CaO19.318</name>
    <name type="ORF">CaO19.7950</name>
</gene>
<reference key="1">
    <citation type="journal article" date="2004" name="Proc. Natl. Acad. Sci. U.S.A.">
        <title>The diploid genome sequence of Candida albicans.</title>
        <authorList>
            <person name="Jones T."/>
            <person name="Federspiel N.A."/>
            <person name="Chibana H."/>
            <person name="Dungan J."/>
            <person name="Kalman S."/>
            <person name="Magee B.B."/>
            <person name="Newport G."/>
            <person name="Thorstenson Y.R."/>
            <person name="Agabian N."/>
            <person name="Magee P.T."/>
            <person name="Davis R.W."/>
            <person name="Scherer S."/>
        </authorList>
    </citation>
    <scope>NUCLEOTIDE SEQUENCE [LARGE SCALE GENOMIC DNA]</scope>
    <source>
        <strain>SC5314 / ATCC MYA-2876</strain>
    </source>
</reference>
<reference key="2">
    <citation type="journal article" date="2007" name="Genome Biol.">
        <title>Assembly of the Candida albicans genome into sixteen supercontigs aligned on the eight chromosomes.</title>
        <authorList>
            <person name="van het Hoog M."/>
            <person name="Rast T.J."/>
            <person name="Martchenko M."/>
            <person name="Grindle S."/>
            <person name="Dignard D."/>
            <person name="Hogues H."/>
            <person name="Cuomo C."/>
            <person name="Berriman M."/>
            <person name="Scherer S."/>
            <person name="Magee B.B."/>
            <person name="Whiteway M."/>
            <person name="Chibana H."/>
            <person name="Nantel A."/>
            <person name="Magee P.T."/>
        </authorList>
    </citation>
    <scope>GENOME REANNOTATION</scope>
    <source>
        <strain>SC5314 / ATCC MYA-2876</strain>
    </source>
</reference>
<reference key="3">
    <citation type="journal article" date="2013" name="Genome Biol.">
        <title>Assembly of a phased diploid Candida albicans genome facilitates allele-specific measurements and provides a simple model for repeat and indel structure.</title>
        <authorList>
            <person name="Muzzey D."/>
            <person name="Schwartz K."/>
            <person name="Weissman J.S."/>
            <person name="Sherlock G."/>
        </authorList>
    </citation>
    <scope>NUCLEOTIDE SEQUENCE [LARGE SCALE GENOMIC DNA]</scope>
    <scope>GENOME REANNOTATION</scope>
    <source>
        <strain>SC5314 / ATCC MYA-2876</strain>
    </source>
</reference>
<feature type="transit peptide" description="Mitochondrion" evidence="2">
    <location>
        <begin position="1"/>
        <end status="unknown"/>
    </location>
</feature>
<feature type="chain" id="PRO_0000301694" description="Iron-sulfur cluster assembly factor IBA57 homolog, mitochondrial">
    <location>
        <begin status="unknown"/>
        <end position="469"/>
    </location>
</feature>
<feature type="region of interest" description="Disordered" evidence="3">
    <location>
        <begin position="376"/>
        <end position="406"/>
    </location>
</feature>
<feature type="compositionally biased region" description="Polar residues" evidence="3">
    <location>
        <begin position="386"/>
        <end position="404"/>
    </location>
</feature>
<proteinExistence type="inferred from homology"/>
<sequence length="469" mass="53100">MRFPNVGLAELSKSIIKIRGPDATKFLNGLVTSRLLPNVVKKKQHTISESENRHSNLSEIIDVSKNYGLMHEDIYDPDYNINISRDGINSMILNSKGRVVTDCFLYPDPFHNVDWVFQESMNEPGYLLEVDTSISQQLMMILKLHKLSAKVDIVPDKKLYSYYYYDDTATFDAWLENIQFKYFKSLDPTTALQNANSFIKDNVFFNQQIAKNILGFAVDNRIPNFGIKFISNKPISTNNDNDGQQDVIPVESLFSESFSQEFDTPTINESGVVQRRFQNGLFEIQDASKGSSLLPFECNLDYTNGLSLDKGCYVGQELTIRTFNNGVIRKRIFPVQFFQLTEYNISYLQDHPIDLNMSDPVVENLSNIPNSSLGKLEITPLDDSEPQQQQPPTNESPFASSPFGSSKVVRKRKTSLGKIVSVKDNLGLVMLAVSDVEKCQIYKLELPSFEGGTQFIGVKVGIPDWWPVN</sequence>
<dbReference type="EMBL" id="CP017625">
    <property type="protein sequence ID" value="AOW28350.1"/>
    <property type="molecule type" value="Genomic_DNA"/>
</dbReference>
<dbReference type="RefSeq" id="XP_720013.2">
    <property type="nucleotide sequence ID" value="XM_714920.2"/>
</dbReference>
<dbReference type="SMR" id="Q5AEF0"/>
<dbReference type="BioGRID" id="1221268">
    <property type="interactions" value="1"/>
</dbReference>
<dbReference type="FunCoup" id="Q5AEF0">
    <property type="interactions" value="313"/>
</dbReference>
<dbReference type="STRING" id="237561.Q5AEF0"/>
<dbReference type="EnsemblFungi" id="C3_03190C_A-T">
    <property type="protein sequence ID" value="C3_03190C_A-T-p1"/>
    <property type="gene ID" value="C3_03190C_A"/>
</dbReference>
<dbReference type="GeneID" id="3638427"/>
<dbReference type="KEGG" id="cal:CAALFM_C303190CA"/>
<dbReference type="CGD" id="CAL0000190751">
    <property type="gene designation" value="orf19.7950"/>
</dbReference>
<dbReference type="VEuPathDB" id="FungiDB:C3_03190C_A"/>
<dbReference type="eggNOG" id="KOG2929">
    <property type="taxonomic scope" value="Eukaryota"/>
</dbReference>
<dbReference type="HOGENOM" id="CLU_007884_7_3_1"/>
<dbReference type="InParanoid" id="Q5AEF0"/>
<dbReference type="OrthoDB" id="191995at2759"/>
<dbReference type="PRO" id="PR:Q5AEF0"/>
<dbReference type="Proteomes" id="UP000000559">
    <property type="component" value="Chromosome 3"/>
</dbReference>
<dbReference type="GO" id="GO:0005759">
    <property type="term" value="C:mitochondrial matrix"/>
    <property type="evidence" value="ECO:0000318"/>
    <property type="project" value="GO_Central"/>
</dbReference>
<dbReference type="GO" id="GO:0016740">
    <property type="term" value="F:transferase activity"/>
    <property type="evidence" value="ECO:0007669"/>
    <property type="project" value="UniProtKB-KW"/>
</dbReference>
<dbReference type="GO" id="GO:0016226">
    <property type="term" value="P:iron-sulfur cluster assembly"/>
    <property type="evidence" value="ECO:0000318"/>
    <property type="project" value="GO_Central"/>
</dbReference>
<dbReference type="Gene3D" id="2.40.30.160">
    <property type="match status" value="1"/>
</dbReference>
<dbReference type="Gene3D" id="3.30.1360.120">
    <property type="entry name" value="Probable tRNA modification gtpase trme, domain 1"/>
    <property type="match status" value="1"/>
</dbReference>
<dbReference type="InterPro" id="IPR027266">
    <property type="entry name" value="TrmE/GcvT_dom1"/>
</dbReference>
<dbReference type="InterPro" id="IPR045179">
    <property type="entry name" value="YgfZ/GcvT"/>
</dbReference>
<dbReference type="InterPro" id="IPR017703">
    <property type="entry name" value="YgfZ/GcvT_CS"/>
</dbReference>
<dbReference type="NCBIfam" id="TIGR03317">
    <property type="entry name" value="ygfZ_signature"/>
    <property type="match status" value="1"/>
</dbReference>
<dbReference type="PANTHER" id="PTHR22602">
    <property type="entry name" value="TRANSFERASE CAF17, MITOCHONDRIAL-RELATED"/>
    <property type="match status" value="1"/>
</dbReference>
<dbReference type="PANTHER" id="PTHR22602:SF0">
    <property type="entry name" value="TRANSFERASE CAF17, MITOCHONDRIAL-RELATED"/>
    <property type="match status" value="1"/>
</dbReference>
<dbReference type="SUPFAM" id="SSF103025">
    <property type="entry name" value="Folate-binding domain"/>
    <property type="match status" value="1"/>
</dbReference>
<organism>
    <name type="scientific">Candida albicans (strain SC5314 / ATCC MYA-2876)</name>
    <name type="common">Yeast</name>
    <dbReference type="NCBI Taxonomy" id="237561"/>
    <lineage>
        <taxon>Eukaryota</taxon>
        <taxon>Fungi</taxon>
        <taxon>Dikarya</taxon>
        <taxon>Ascomycota</taxon>
        <taxon>Saccharomycotina</taxon>
        <taxon>Pichiomycetes</taxon>
        <taxon>Debaryomycetaceae</taxon>
        <taxon>Candida/Lodderomyces clade</taxon>
        <taxon>Candida</taxon>
    </lineage>
</organism>
<evidence type="ECO:0000250" key="1">
    <source>
        <dbReference type="UniProtKB" id="P47158"/>
    </source>
</evidence>
<evidence type="ECO:0000255" key="2"/>
<evidence type="ECO:0000256" key="3">
    <source>
        <dbReference type="SAM" id="MobiDB-lite"/>
    </source>
</evidence>
<evidence type="ECO:0000305" key="4"/>
<accession>Q5AEF0</accession>
<accession>A0A1D8PJR8</accession>
<accession>Q5AET5</accession>
<comment type="subcellular location">
    <subcellularLocation>
        <location evidence="1">Mitochondrion matrix</location>
    </subcellularLocation>
</comment>
<comment type="similarity">
    <text evidence="4">Belongs to the GcvT family. CAF17/IBA57 subfamily.</text>
</comment>